<reference key="1">
    <citation type="journal article" date="2004" name="Genome Res.">
        <title>The status, quality, and expansion of the NIH full-length cDNA project: the Mammalian Gene Collection (MGC).</title>
        <authorList>
            <consortium name="The MGC Project Team"/>
        </authorList>
    </citation>
    <scope>NUCLEOTIDE SEQUENCE [LARGE SCALE MRNA]</scope>
    <scope>VARIANT SER-242</scope>
    <source>
        <tissue>Brain</tissue>
    </source>
</reference>
<reference key="2">
    <citation type="journal article" date="2019" name="J. Proteome Res.">
        <title>Cell Type-Specific Expression of Testis Elevated Genes Based on Transcriptomics and Antibody-Based Proteomics.</title>
        <authorList>
            <person name="Pineau C."/>
            <person name="Hikmet F."/>
            <person name="Zhang C."/>
            <person name="Oksvold P."/>
            <person name="Chen S."/>
            <person name="Fagerberg L."/>
            <person name="Uhlen M."/>
            <person name="Lindskog C."/>
        </authorList>
    </citation>
    <scope>SUBCELLULAR LOCATION</scope>
</reference>
<comment type="subcellular location">
    <subcellularLocation>
        <location evidence="3">Cell projection</location>
        <location evidence="3">Cilium</location>
        <location evidence="3">Flagellum</location>
    </subcellularLocation>
</comment>
<feature type="chain" id="PRO_0000240702" description="Uncharacterized protein C11orf42">
    <location>
        <begin position="1"/>
        <end position="333"/>
    </location>
</feature>
<feature type="region of interest" description="Disordered" evidence="1">
    <location>
        <begin position="234"/>
        <end position="333"/>
    </location>
</feature>
<feature type="compositionally biased region" description="Pro residues" evidence="1">
    <location>
        <begin position="251"/>
        <end position="265"/>
    </location>
</feature>
<feature type="compositionally biased region" description="Polar residues" evidence="1">
    <location>
        <begin position="324"/>
        <end position="333"/>
    </location>
</feature>
<feature type="sequence variant" id="VAR_026831" description="In dbSNP:rs10769671." evidence="2">
    <original>P</original>
    <variation>S</variation>
    <location>
        <position position="242"/>
    </location>
</feature>
<keyword id="KW-0966">Cell projection</keyword>
<keyword id="KW-0969">Cilium</keyword>
<keyword id="KW-0282">Flagellum</keyword>
<keyword id="KW-1267">Proteomics identification</keyword>
<keyword id="KW-1185">Reference proteome</keyword>
<accession>Q8N5U0</accession>
<sequence length="333" mass="36368">MLVGTPNLLTLDEADATWTLIKDKVIEEHFGPNAVAVPFLSDAACYDLLGVLVKQSRPAHTRLALPGRQGRRALKPVGPLPSLLEQAGSEGAFAHCTREYSPNGRAERAYEETRMLDGQPCKIRLHMGDLRKKVAFLLLPPGQVSLQQTLPWLRSTHSIYVIYQVFSCSWLQLGLTSTAREPQLLRLLRSLPVAFSCLKFSLQSKGVLGPQKPLTKDPLPHGANWVRPNLSIMPPLAPTSAPADTTEAADVPPPVPAPPTPPPQEGPEDKPTRFSYKGRNPFWRGPQILSENWLFSPRSPPPGAQGGGPRDPDGHSMSLPLLQGLSSEFDSDD</sequence>
<name>CK042_HUMAN</name>
<evidence type="ECO:0000256" key="1">
    <source>
        <dbReference type="SAM" id="MobiDB-lite"/>
    </source>
</evidence>
<evidence type="ECO:0000269" key="2">
    <source>
    </source>
</evidence>
<evidence type="ECO:0000269" key="3">
    <source>
    </source>
</evidence>
<protein>
    <recommendedName>
        <fullName>Uncharacterized protein C11orf42</fullName>
    </recommendedName>
</protein>
<proteinExistence type="evidence at protein level"/>
<gene>
    <name type="primary">C11orf42</name>
</gene>
<dbReference type="EMBL" id="BC031612">
    <property type="protein sequence ID" value="AAH31612.1"/>
    <property type="molecule type" value="mRNA"/>
</dbReference>
<dbReference type="CCDS" id="CCDS7759.1"/>
<dbReference type="RefSeq" id="NP_775796.2">
    <property type="nucleotide sequence ID" value="NM_173525.3"/>
</dbReference>
<dbReference type="BioGRID" id="127751">
    <property type="interactions" value="2"/>
</dbReference>
<dbReference type="FunCoup" id="Q8N5U0">
    <property type="interactions" value="2"/>
</dbReference>
<dbReference type="IntAct" id="Q8N5U0">
    <property type="interactions" value="2"/>
</dbReference>
<dbReference type="STRING" id="9606.ENSP00000321021"/>
<dbReference type="GlyGen" id="Q8N5U0">
    <property type="glycosylation" value="1 site"/>
</dbReference>
<dbReference type="iPTMnet" id="Q8N5U0"/>
<dbReference type="PhosphoSitePlus" id="Q8N5U0"/>
<dbReference type="BioMuta" id="C11orf42"/>
<dbReference type="jPOST" id="Q8N5U0"/>
<dbReference type="MassIVE" id="Q8N5U0"/>
<dbReference type="PaxDb" id="9606-ENSP00000321021"/>
<dbReference type="PeptideAtlas" id="Q8N5U0"/>
<dbReference type="ProteomicsDB" id="72096"/>
<dbReference type="Antibodypedia" id="57987">
    <property type="antibodies" value="19 antibodies from 10 providers"/>
</dbReference>
<dbReference type="DNASU" id="160298"/>
<dbReference type="Ensembl" id="ENST00000316375.3">
    <property type="protein sequence ID" value="ENSP00000321021.2"/>
    <property type="gene ID" value="ENSG00000180878.3"/>
</dbReference>
<dbReference type="GeneID" id="160298"/>
<dbReference type="KEGG" id="hsa:160298"/>
<dbReference type="MANE-Select" id="ENST00000316375.3">
    <property type="protein sequence ID" value="ENSP00000321021.2"/>
    <property type="RefSeq nucleotide sequence ID" value="NM_173525.3"/>
    <property type="RefSeq protein sequence ID" value="NP_775796.2"/>
</dbReference>
<dbReference type="UCSC" id="uc001mcj.4">
    <property type="organism name" value="human"/>
</dbReference>
<dbReference type="AGR" id="HGNC:28541"/>
<dbReference type="CTD" id="160298"/>
<dbReference type="GeneCards" id="C11orf42"/>
<dbReference type="HGNC" id="HGNC:28541">
    <property type="gene designation" value="C11orf42"/>
</dbReference>
<dbReference type="HPA" id="ENSG00000180878">
    <property type="expression patterns" value="Tissue enriched (testis)"/>
</dbReference>
<dbReference type="neXtProt" id="NX_Q8N5U0"/>
<dbReference type="OpenTargets" id="ENSG00000180878"/>
<dbReference type="PharmGKB" id="PA142672287"/>
<dbReference type="VEuPathDB" id="HostDB:ENSG00000180878"/>
<dbReference type="eggNOG" id="ENOG502S08J">
    <property type="taxonomic scope" value="Eukaryota"/>
</dbReference>
<dbReference type="GeneTree" id="ENSGT00390000016268"/>
<dbReference type="HOGENOM" id="CLU_968206_0_0_1"/>
<dbReference type="InParanoid" id="Q8N5U0"/>
<dbReference type="OMA" id="CTQEYSP"/>
<dbReference type="OrthoDB" id="9042900at2759"/>
<dbReference type="PAN-GO" id="Q8N5U0">
    <property type="GO annotations" value="0 GO annotations based on evolutionary models"/>
</dbReference>
<dbReference type="PhylomeDB" id="Q8N5U0"/>
<dbReference type="TreeFam" id="TF328634"/>
<dbReference type="PathwayCommons" id="Q8N5U0"/>
<dbReference type="SignaLink" id="Q8N5U0"/>
<dbReference type="BioGRID-ORCS" id="160298">
    <property type="hits" value="5 hits in 1112 CRISPR screens"/>
</dbReference>
<dbReference type="ChiTaRS" id="C11orf42">
    <property type="organism name" value="human"/>
</dbReference>
<dbReference type="GenomeRNAi" id="160298"/>
<dbReference type="Pharos" id="Q8N5U0">
    <property type="development level" value="Tdark"/>
</dbReference>
<dbReference type="PRO" id="PR:Q8N5U0"/>
<dbReference type="Proteomes" id="UP000005640">
    <property type="component" value="Chromosome 11"/>
</dbReference>
<dbReference type="RNAct" id="Q8N5U0">
    <property type="molecule type" value="protein"/>
</dbReference>
<dbReference type="Bgee" id="ENSG00000180878">
    <property type="expression patterns" value="Expressed in male germ line stem cell (sensu Vertebrata) in testis and 89 other cell types or tissues"/>
</dbReference>
<dbReference type="GO" id="GO:0036126">
    <property type="term" value="C:sperm flagellum"/>
    <property type="evidence" value="ECO:0000314"/>
    <property type="project" value="UniProtKB"/>
</dbReference>
<dbReference type="InterPro" id="IPR031366">
    <property type="entry name" value="DUF4663"/>
</dbReference>
<dbReference type="PANTHER" id="PTHR36872">
    <property type="entry name" value="GENE 5901-RELATED"/>
    <property type="match status" value="1"/>
</dbReference>
<dbReference type="PANTHER" id="PTHR36872:SF1">
    <property type="entry name" value="GENE 5901-RELATED"/>
    <property type="match status" value="1"/>
</dbReference>
<dbReference type="Pfam" id="PF15668">
    <property type="entry name" value="DUF4663"/>
    <property type="match status" value="1"/>
</dbReference>
<organism>
    <name type="scientific">Homo sapiens</name>
    <name type="common">Human</name>
    <dbReference type="NCBI Taxonomy" id="9606"/>
    <lineage>
        <taxon>Eukaryota</taxon>
        <taxon>Metazoa</taxon>
        <taxon>Chordata</taxon>
        <taxon>Craniata</taxon>
        <taxon>Vertebrata</taxon>
        <taxon>Euteleostomi</taxon>
        <taxon>Mammalia</taxon>
        <taxon>Eutheria</taxon>
        <taxon>Euarchontoglires</taxon>
        <taxon>Primates</taxon>
        <taxon>Haplorrhini</taxon>
        <taxon>Catarrhini</taxon>
        <taxon>Hominidae</taxon>
        <taxon>Homo</taxon>
    </lineage>
</organism>